<dbReference type="EC" id="2.1.1.61" evidence="1"/>
<dbReference type="EC" id="1.5.-.-" evidence="1"/>
<dbReference type="EMBL" id="CP000789">
    <property type="protein sequence ID" value="ABU72055.1"/>
    <property type="molecule type" value="Genomic_DNA"/>
</dbReference>
<dbReference type="RefSeq" id="WP_012128606.1">
    <property type="nucleotide sequence ID" value="NC_009783.1"/>
</dbReference>
<dbReference type="SMR" id="A7MS81"/>
<dbReference type="KEGG" id="vha:VIBHAR_03106"/>
<dbReference type="PATRIC" id="fig|338187.25.peg.3083"/>
<dbReference type="Proteomes" id="UP000008152">
    <property type="component" value="Chromosome I"/>
</dbReference>
<dbReference type="GO" id="GO:0005737">
    <property type="term" value="C:cytoplasm"/>
    <property type="evidence" value="ECO:0007669"/>
    <property type="project" value="UniProtKB-SubCell"/>
</dbReference>
<dbReference type="GO" id="GO:0050660">
    <property type="term" value="F:flavin adenine dinucleotide binding"/>
    <property type="evidence" value="ECO:0007669"/>
    <property type="project" value="UniProtKB-UniRule"/>
</dbReference>
<dbReference type="GO" id="GO:0016645">
    <property type="term" value="F:oxidoreductase activity, acting on the CH-NH group of donors"/>
    <property type="evidence" value="ECO:0007669"/>
    <property type="project" value="InterPro"/>
</dbReference>
<dbReference type="GO" id="GO:0004808">
    <property type="term" value="F:tRNA (5-methylaminomethyl-2-thiouridylate)(34)-methyltransferase activity"/>
    <property type="evidence" value="ECO:0007669"/>
    <property type="project" value="UniProtKB-EC"/>
</dbReference>
<dbReference type="GO" id="GO:0032259">
    <property type="term" value="P:methylation"/>
    <property type="evidence" value="ECO:0007669"/>
    <property type="project" value="UniProtKB-KW"/>
</dbReference>
<dbReference type="GO" id="GO:0002098">
    <property type="term" value="P:tRNA wobble uridine modification"/>
    <property type="evidence" value="ECO:0007669"/>
    <property type="project" value="TreeGrafter"/>
</dbReference>
<dbReference type="FunFam" id="3.40.50.150:FF:000107">
    <property type="entry name" value="tRNA 5-methylaminomethyl-2-thiouridine biosynthesis bifunctional protein MnmC"/>
    <property type="match status" value="1"/>
</dbReference>
<dbReference type="Gene3D" id="3.30.9.10">
    <property type="entry name" value="D-Amino Acid Oxidase, subunit A, domain 2"/>
    <property type="match status" value="1"/>
</dbReference>
<dbReference type="Gene3D" id="3.50.50.60">
    <property type="entry name" value="FAD/NAD(P)-binding domain"/>
    <property type="match status" value="1"/>
</dbReference>
<dbReference type="Gene3D" id="3.40.50.150">
    <property type="entry name" value="Vaccinia Virus protein VP39"/>
    <property type="match status" value="1"/>
</dbReference>
<dbReference type="HAMAP" id="MF_01102">
    <property type="entry name" value="MnmC"/>
    <property type="match status" value="1"/>
</dbReference>
<dbReference type="InterPro" id="IPR006076">
    <property type="entry name" value="FAD-dep_OxRdtase"/>
</dbReference>
<dbReference type="InterPro" id="IPR036188">
    <property type="entry name" value="FAD/NAD-bd_sf"/>
</dbReference>
<dbReference type="InterPro" id="IPR008471">
    <property type="entry name" value="MnmC-like_methylTransf"/>
</dbReference>
<dbReference type="InterPro" id="IPR029063">
    <property type="entry name" value="SAM-dependent_MTases_sf"/>
</dbReference>
<dbReference type="InterPro" id="IPR023032">
    <property type="entry name" value="tRNA_MAMT_biosynth_bifunc_MnmC"/>
</dbReference>
<dbReference type="InterPro" id="IPR047785">
    <property type="entry name" value="tRNA_MNMC2"/>
</dbReference>
<dbReference type="InterPro" id="IPR017610">
    <property type="entry name" value="tRNA_S-uridine_synth_MnmC_C"/>
</dbReference>
<dbReference type="NCBIfam" id="TIGR03197">
    <property type="entry name" value="MnmC_Cterm"/>
    <property type="match status" value="1"/>
</dbReference>
<dbReference type="NCBIfam" id="NF002481">
    <property type="entry name" value="PRK01747.1-2"/>
    <property type="match status" value="1"/>
</dbReference>
<dbReference type="NCBIfam" id="NF002484">
    <property type="entry name" value="PRK01747.1-5"/>
    <property type="match status" value="1"/>
</dbReference>
<dbReference type="NCBIfam" id="NF033855">
    <property type="entry name" value="tRNA_MNMC2"/>
    <property type="match status" value="1"/>
</dbReference>
<dbReference type="PANTHER" id="PTHR13847">
    <property type="entry name" value="SARCOSINE DEHYDROGENASE-RELATED"/>
    <property type="match status" value="1"/>
</dbReference>
<dbReference type="PANTHER" id="PTHR13847:SF283">
    <property type="entry name" value="TRNA 5-METHYLAMINOMETHYL-2-THIOURIDINE BIOSYNTHESIS BIFUNCTIONAL PROTEIN MNMC"/>
    <property type="match status" value="1"/>
</dbReference>
<dbReference type="Pfam" id="PF01266">
    <property type="entry name" value="DAO"/>
    <property type="match status" value="1"/>
</dbReference>
<dbReference type="Pfam" id="PF05430">
    <property type="entry name" value="Methyltransf_30"/>
    <property type="match status" value="1"/>
</dbReference>
<dbReference type="SUPFAM" id="SSF51905">
    <property type="entry name" value="FAD/NAD(P)-binding domain"/>
    <property type="match status" value="1"/>
</dbReference>
<keyword id="KW-0963">Cytoplasm</keyword>
<keyword id="KW-0274">FAD</keyword>
<keyword id="KW-0285">Flavoprotein</keyword>
<keyword id="KW-0489">Methyltransferase</keyword>
<keyword id="KW-0511">Multifunctional enzyme</keyword>
<keyword id="KW-0560">Oxidoreductase</keyword>
<keyword id="KW-0949">S-adenosyl-L-methionine</keyword>
<keyword id="KW-0808">Transferase</keyword>
<keyword id="KW-0819">tRNA processing</keyword>
<proteinExistence type="inferred from homology"/>
<organism>
    <name type="scientific">Vibrio campbellii (strain ATCC BAA-1116)</name>
    <dbReference type="NCBI Taxonomy" id="2902295"/>
    <lineage>
        <taxon>Bacteria</taxon>
        <taxon>Pseudomonadati</taxon>
        <taxon>Pseudomonadota</taxon>
        <taxon>Gammaproteobacteria</taxon>
        <taxon>Vibrionales</taxon>
        <taxon>Vibrionaceae</taxon>
        <taxon>Vibrio</taxon>
    </lineage>
</organism>
<gene>
    <name evidence="1" type="primary">mnmC</name>
    <name type="ordered locus">VIBHAR_03106</name>
</gene>
<evidence type="ECO:0000255" key="1">
    <source>
        <dbReference type="HAMAP-Rule" id="MF_01102"/>
    </source>
</evidence>
<reference key="1">
    <citation type="submission" date="2007-08" db="EMBL/GenBank/DDBJ databases">
        <authorList>
            <consortium name="The Vibrio harveyi Genome Sequencing Project"/>
            <person name="Bassler B."/>
            <person name="Clifton S.W."/>
            <person name="Fulton L."/>
            <person name="Delehaunty K."/>
            <person name="Fronick C."/>
            <person name="Harrison M."/>
            <person name="Markivic C."/>
            <person name="Fulton R."/>
            <person name="Tin-Wollam A.-M."/>
            <person name="Shah N."/>
            <person name="Pepin K."/>
            <person name="Nash W."/>
            <person name="Thiruvilangam P."/>
            <person name="Bhonagiri V."/>
            <person name="Waters C."/>
            <person name="Tu K.C."/>
            <person name="Irgon J."/>
            <person name="Wilson R.K."/>
        </authorList>
    </citation>
    <scope>NUCLEOTIDE SEQUENCE [LARGE SCALE GENOMIC DNA]</scope>
    <source>
        <strain>ATCC BAA-1116 / BB120</strain>
    </source>
</reference>
<protein>
    <recommendedName>
        <fullName evidence="1">tRNA 5-methylaminomethyl-2-thiouridine biosynthesis bifunctional protein MnmC</fullName>
        <shortName evidence="1">tRNA mnm(5)s(2)U biosynthesis bifunctional protein</shortName>
    </recommendedName>
    <domain>
        <recommendedName>
            <fullName evidence="1">tRNA (mnm(5)s(2)U34)-methyltransferase</fullName>
            <ecNumber evidence="1">2.1.1.61</ecNumber>
        </recommendedName>
    </domain>
    <domain>
        <recommendedName>
            <fullName evidence="1">FAD-dependent cmnm(5)s(2)U34 oxidoreductase</fullName>
            <ecNumber evidence="1">1.5.-.-</ecNumber>
        </recommendedName>
    </domain>
</protein>
<accession>A7MS81</accession>
<name>MNMC_VIBC1</name>
<feature type="chain" id="PRO_1000065013" description="tRNA 5-methylaminomethyl-2-thiouridine biosynthesis bifunctional protein MnmC">
    <location>
        <begin position="1"/>
        <end position="672"/>
    </location>
</feature>
<feature type="region of interest" description="tRNA (mnm(5)s(2)U34)-methyltransferase">
    <location>
        <begin position="1"/>
        <end position="243"/>
    </location>
</feature>
<feature type="region of interest" description="FAD-dependent cmnm(5)s(2)U34 oxidoreductase">
    <location>
        <begin position="269"/>
        <end position="672"/>
    </location>
</feature>
<sequence>MTSIKNAELGWNEAGTPVSDQFDDVYFSNVNGLEETRYVFLKQNHLPERWQEFDQRRFVIGETGFGTGLNFLAVWQWFTEFRREYPEATLKELHFVSFEKYPLSKADLEKAHQSWPELAEFAEKLQQHYPAAVPECHRIVLEDGAITLDLWFGDIKDCMPLVPYAEQGLIDAWFLDGFAPSKNPEMWNQNLFNGMAKLAKQDCTVATFTAAGFVRRGLNEAGFAMKKVKGFGTKREMIAGSMEQREAHSNHLPWFNRTASTNHDSIAIIGGGIASAALAKTLVRRGQNVTLYCKDAQPAEGASGNRQGAVYPLLNGPHKGVSRVFAPGFLFARQFVDQAAQDIQFDHDWCGITQLMWDDKSADKLEKMLAGNFTPELIHKLSSEETAEKIGLPIDMASVHYPLGGWLCPAELTRGLIAKLENTELFEAKFEHQVKSLDWDEARKLWTLKANGQSFEHSTVVVANGSEFQTLSQTADLPMGQVKGQVSHAPATETLSKLKTVLCYDGYMTPVNPNNQHLCIGASYDRSHLDYEFDEDAQKDNAEKLVKCLPNQTWTKEVDTSGNLSRQGIRCVSRDHLPFVGNVGDFETIKTQYADLQNQQEQDVEAIHQFPNLFCFLGLGSRGLSSAPLMAEVLASQICGDPLPLPVDVLTELHPSRMWVRKLRKGKAITEL</sequence>
<comment type="function">
    <text evidence="1">Catalyzes the last two steps in the biosynthesis of 5-methylaminomethyl-2-thiouridine (mnm(5)s(2)U) at the wobble position (U34) in tRNA. Catalyzes the FAD-dependent demodification of cmnm(5)s(2)U34 to nm(5)s(2)U34, followed by the transfer of a methyl group from S-adenosyl-L-methionine to nm(5)s(2)U34, to form mnm(5)s(2)U34.</text>
</comment>
<comment type="catalytic activity">
    <reaction evidence="1">
        <text>5-aminomethyl-2-thiouridine(34) in tRNA + S-adenosyl-L-methionine = 5-methylaminomethyl-2-thiouridine(34) in tRNA + S-adenosyl-L-homocysteine + H(+)</text>
        <dbReference type="Rhea" id="RHEA:19569"/>
        <dbReference type="Rhea" id="RHEA-COMP:10195"/>
        <dbReference type="Rhea" id="RHEA-COMP:10197"/>
        <dbReference type="ChEBI" id="CHEBI:15378"/>
        <dbReference type="ChEBI" id="CHEBI:57856"/>
        <dbReference type="ChEBI" id="CHEBI:59789"/>
        <dbReference type="ChEBI" id="CHEBI:74454"/>
        <dbReference type="ChEBI" id="CHEBI:74455"/>
        <dbReference type="EC" id="2.1.1.61"/>
    </reaction>
</comment>
<comment type="cofactor">
    <cofactor evidence="1">
        <name>FAD</name>
        <dbReference type="ChEBI" id="CHEBI:57692"/>
    </cofactor>
</comment>
<comment type="subcellular location">
    <subcellularLocation>
        <location evidence="1">Cytoplasm</location>
    </subcellularLocation>
</comment>
<comment type="similarity">
    <text evidence="1">In the N-terminal section; belongs to the methyltransferase superfamily. tRNA (mnm(5)s(2)U34)-methyltransferase family.</text>
</comment>
<comment type="similarity">
    <text evidence="1">In the C-terminal section; belongs to the DAO family.</text>
</comment>